<keyword id="KW-0067">ATP-binding</keyword>
<keyword id="KW-0547">Nucleotide-binding</keyword>
<keyword id="KW-0548">Nucleotidyltransferase</keyword>
<keyword id="KW-0808">Transferase</keyword>
<name>CYSD_SHESA</name>
<reference key="1">
    <citation type="submission" date="2006-09" db="EMBL/GenBank/DDBJ databases">
        <title>Complete sequence of chromosome 1 of Shewanella sp. ANA-3.</title>
        <authorList>
            <person name="Copeland A."/>
            <person name="Lucas S."/>
            <person name="Lapidus A."/>
            <person name="Barry K."/>
            <person name="Detter J.C."/>
            <person name="Glavina del Rio T."/>
            <person name="Hammon N."/>
            <person name="Israni S."/>
            <person name="Dalin E."/>
            <person name="Tice H."/>
            <person name="Pitluck S."/>
            <person name="Chertkov O."/>
            <person name="Brettin T."/>
            <person name="Bruce D."/>
            <person name="Han C."/>
            <person name="Tapia R."/>
            <person name="Gilna P."/>
            <person name="Schmutz J."/>
            <person name="Larimer F."/>
            <person name="Land M."/>
            <person name="Hauser L."/>
            <person name="Kyrpides N."/>
            <person name="Kim E."/>
            <person name="Newman D."/>
            <person name="Salticov C."/>
            <person name="Konstantinidis K."/>
            <person name="Klappenback J."/>
            <person name="Tiedje J."/>
            <person name="Richardson P."/>
        </authorList>
    </citation>
    <scope>NUCLEOTIDE SEQUENCE [LARGE SCALE GENOMIC DNA]</scope>
    <source>
        <strain>ANA-3</strain>
    </source>
</reference>
<proteinExistence type="inferred from homology"/>
<accession>A0KTI2</accession>
<organism>
    <name type="scientific">Shewanella sp. (strain ANA-3)</name>
    <dbReference type="NCBI Taxonomy" id="94122"/>
    <lineage>
        <taxon>Bacteria</taxon>
        <taxon>Pseudomonadati</taxon>
        <taxon>Pseudomonadota</taxon>
        <taxon>Gammaproteobacteria</taxon>
        <taxon>Alteromonadales</taxon>
        <taxon>Shewanellaceae</taxon>
        <taxon>Shewanella</taxon>
    </lineage>
</organism>
<gene>
    <name evidence="1" type="primary">cysD</name>
    <name type="ordered locus">Shewana3_0863</name>
</gene>
<dbReference type="EC" id="2.7.7.4" evidence="1"/>
<dbReference type="EMBL" id="CP000469">
    <property type="protein sequence ID" value="ABK47101.1"/>
    <property type="molecule type" value="Genomic_DNA"/>
</dbReference>
<dbReference type="RefSeq" id="WP_011623816.1">
    <property type="nucleotide sequence ID" value="NC_008577.1"/>
</dbReference>
<dbReference type="SMR" id="A0KTI2"/>
<dbReference type="STRING" id="94122.Shewana3_0863"/>
<dbReference type="GeneID" id="75187599"/>
<dbReference type="KEGG" id="shn:Shewana3_0863"/>
<dbReference type="eggNOG" id="COG0175">
    <property type="taxonomic scope" value="Bacteria"/>
</dbReference>
<dbReference type="HOGENOM" id="CLU_043026_0_0_6"/>
<dbReference type="OrthoDB" id="9772604at2"/>
<dbReference type="UniPathway" id="UPA00140">
    <property type="reaction ID" value="UER00204"/>
</dbReference>
<dbReference type="Proteomes" id="UP000002589">
    <property type="component" value="Chromosome"/>
</dbReference>
<dbReference type="GO" id="GO:0005524">
    <property type="term" value="F:ATP binding"/>
    <property type="evidence" value="ECO:0007669"/>
    <property type="project" value="UniProtKB-KW"/>
</dbReference>
<dbReference type="GO" id="GO:0004781">
    <property type="term" value="F:sulfate adenylyltransferase (ATP) activity"/>
    <property type="evidence" value="ECO:0007669"/>
    <property type="project" value="UniProtKB-UniRule"/>
</dbReference>
<dbReference type="GO" id="GO:0070814">
    <property type="term" value="P:hydrogen sulfide biosynthetic process"/>
    <property type="evidence" value="ECO:0007669"/>
    <property type="project" value="UniProtKB-UniRule"/>
</dbReference>
<dbReference type="GO" id="GO:0000103">
    <property type="term" value="P:sulfate assimilation"/>
    <property type="evidence" value="ECO:0007669"/>
    <property type="project" value="UniProtKB-UniRule"/>
</dbReference>
<dbReference type="CDD" id="cd23946">
    <property type="entry name" value="Sulfate_adenylyltransferase_2"/>
    <property type="match status" value="1"/>
</dbReference>
<dbReference type="FunFam" id="3.40.50.620:FF:000002">
    <property type="entry name" value="Sulfate adenylyltransferase subunit 2"/>
    <property type="match status" value="1"/>
</dbReference>
<dbReference type="Gene3D" id="3.40.50.620">
    <property type="entry name" value="HUPs"/>
    <property type="match status" value="1"/>
</dbReference>
<dbReference type="HAMAP" id="MF_00064">
    <property type="entry name" value="Sulf_adenylyltr_sub2"/>
    <property type="match status" value="1"/>
</dbReference>
<dbReference type="InterPro" id="IPR002500">
    <property type="entry name" value="PAPS_reduct_dom"/>
</dbReference>
<dbReference type="InterPro" id="IPR014729">
    <property type="entry name" value="Rossmann-like_a/b/a_fold"/>
</dbReference>
<dbReference type="InterPro" id="IPR011784">
    <property type="entry name" value="SO4_adenylTrfase_ssu"/>
</dbReference>
<dbReference type="InterPro" id="IPR050128">
    <property type="entry name" value="Sulfate_adenylyltrnsfr_sub2"/>
</dbReference>
<dbReference type="NCBIfam" id="TIGR02039">
    <property type="entry name" value="CysD"/>
    <property type="match status" value="1"/>
</dbReference>
<dbReference type="NCBIfam" id="NF003587">
    <property type="entry name" value="PRK05253.1"/>
    <property type="match status" value="1"/>
</dbReference>
<dbReference type="NCBIfam" id="NF009214">
    <property type="entry name" value="PRK12563.1"/>
    <property type="match status" value="1"/>
</dbReference>
<dbReference type="PANTHER" id="PTHR43196">
    <property type="entry name" value="SULFATE ADENYLYLTRANSFERASE SUBUNIT 2"/>
    <property type="match status" value="1"/>
</dbReference>
<dbReference type="PANTHER" id="PTHR43196:SF1">
    <property type="entry name" value="SULFATE ADENYLYLTRANSFERASE SUBUNIT 2"/>
    <property type="match status" value="1"/>
</dbReference>
<dbReference type="Pfam" id="PF01507">
    <property type="entry name" value="PAPS_reduct"/>
    <property type="match status" value="1"/>
</dbReference>
<dbReference type="PIRSF" id="PIRSF002936">
    <property type="entry name" value="CysDAde_trans"/>
    <property type="match status" value="1"/>
</dbReference>
<dbReference type="SUPFAM" id="SSF52402">
    <property type="entry name" value="Adenine nucleotide alpha hydrolases-like"/>
    <property type="match status" value="1"/>
</dbReference>
<sequence length="302" mass="34938">MAGRELSHLQQLEAESIQIIREVAAEFDNPVMLYSIGKDSSVMLHLARKAFYPGKIPFPLLHVDTGWKFKEMIAFRDAQAKKFGFELLTHTNPEGVAQGINPFDHGSAKHTDIMKTQGLKQALNQYGFDAAFGGARRDEEKSRAKERVYSFRDRHHRWDPKNQRPELWRTYNGAVNKGESIRVFPLSNWTELDIWQYIYQENIELVPLYFAAERPVVERGGQLIMADDERMKLEEGETIKHEVVRFRTLGCYPLTAAMHSQADNLEKIIEEMLLTRSSERQGRLIDSDQSASMEQKKRQGYF</sequence>
<protein>
    <recommendedName>
        <fullName evidence="1">Sulfate adenylyltransferase subunit 2</fullName>
        <ecNumber evidence="1">2.7.7.4</ecNumber>
    </recommendedName>
    <alternativeName>
        <fullName evidence="1">ATP-sulfurylase small subunit</fullName>
    </alternativeName>
    <alternativeName>
        <fullName evidence="1">Sulfate adenylate transferase</fullName>
        <shortName evidence="1">SAT</shortName>
    </alternativeName>
</protein>
<comment type="function">
    <text evidence="1">With CysN forms the ATP sulfurylase (ATPS) that catalyzes the adenylation of sulfate producing adenosine 5'-phosphosulfate (APS) and diphosphate, the first enzymatic step in sulfur assimilation pathway. APS synthesis involves the formation of a high-energy phosphoric-sulfuric acid anhydride bond driven by GTP hydrolysis by CysN coupled to ATP hydrolysis by CysD.</text>
</comment>
<comment type="catalytic activity">
    <reaction evidence="1">
        <text>sulfate + ATP + H(+) = adenosine 5'-phosphosulfate + diphosphate</text>
        <dbReference type="Rhea" id="RHEA:18133"/>
        <dbReference type="ChEBI" id="CHEBI:15378"/>
        <dbReference type="ChEBI" id="CHEBI:16189"/>
        <dbReference type="ChEBI" id="CHEBI:30616"/>
        <dbReference type="ChEBI" id="CHEBI:33019"/>
        <dbReference type="ChEBI" id="CHEBI:58243"/>
        <dbReference type="EC" id="2.7.7.4"/>
    </reaction>
</comment>
<comment type="pathway">
    <text evidence="1">Sulfur metabolism; hydrogen sulfide biosynthesis; sulfite from sulfate: step 1/3.</text>
</comment>
<comment type="subunit">
    <text evidence="1">Heterodimer composed of CysD, the smaller subunit, and CysN.</text>
</comment>
<comment type="similarity">
    <text evidence="1">Belongs to the PAPS reductase family. CysD subfamily.</text>
</comment>
<feature type="chain" id="PRO_1000008989" description="Sulfate adenylyltransferase subunit 2">
    <location>
        <begin position="1"/>
        <end position="302"/>
    </location>
</feature>
<feature type="region of interest" description="Disordered" evidence="2">
    <location>
        <begin position="280"/>
        <end position="302"/>
    </location>
</feature>
<evidence type="ECO:0000255" key="1">
    <source>
        <dbReference type="HAMAP-Rule" id="MF_00064"/>
    </source>
</evidence>
<evidence type="ECO:0000256" key="2">
    <source>
        <dbReference type="SAM" id="MobiDB-lite"/>
    </source>
</evidence>